<comment type="function">
    <text evidence="1">An accessory protein needed during the final step in the assembly of 30S ribosomal subunit, possibly for assembly of the head region. Essential for efficient processing of 16S rRNA. May be needed both before and after RbfA during the maturation of 16S rRNA. It has affinity for free ribosomal 30S subunits but not for 70S ribosomes.</text>
</comment>
<comment type="subunit">
    <text evidence="1">Binds ribosomal protein uS19.</text>
</comment>
<comment type="subcellular location">
    <subcellularLocation>
        <location evidence="1">Cytoplasm</location>
    </subcellularLocation>
</comment>
<comment type="domain">
    <text evidence="1">The PRC barrel domain binds ribosomal protein uS19.</text>
</comment>
<comment type="similarity">
    <text evidence="1">Belongs to the RimM family.</text>
</comment>
<proteinExistence type="inferred from homology"/>
<reference key="1">
    <citation type="journal article" date="2008" name="DNA Res.">
        <title>Comparative genome analysis of Lactobacillus reuteri and Lactobacillus fermentum reveal a genomic island for reuterin and cobalamin production.</title>
        <authorList>
            <person name="Morita H."/>
            <person name="Toh H."/>
            <person name="Fukuda S."/>
            <person name="Horikawa H."/>
            <person name="Oshima K."/>
            <person name="Suzuki T."/>
            <person name="Murakami M."/>
            <person name="Hisamatsu S."/>
            <person name="Kato Y."/>
            <person name="Takizawa T."/>
            <person name="Fukuoka H."/>
            <person name="Yoshimura T."/>
            <person name="Itoh K."/>
            <person name="O'Sullivan D.J."/>
            <person name="McKay L.L."/>
            <person name="Ohno H."/>
            <person name="Kikuchi J."/>
            <person name="Masaoka T."/>
            <person name="Hattori M."/>
        </authorList>
    </citation>
    <scope>NUCLEOTIDE SEQUENCE [LARGE SCALE GENOMIC DNA]</scope>
    <source>
        <strain>NBRC 3956 / LMG 18251</strain>
    </source>
</reference>
<dbReference type="EMBL" id="AP008937">
    <property type="protein sequence ID" value="BAG27558.1"/>
    <property type="molecule type" value="Genomic_DNA"/>
</dbReference>
<dbReference type="RefSeq" id="WP_012391434.1">
    <property type="nucleotide sequence ID" value="NC_010610.1"/>
</dbReference>
<dbReference type="SMR" id="B2GD26"/>
<dbReference type="KEGG" id="lfe:LAF_1222"/>
<dbReference type="PATRIC" id="fig|334390.5.peg.1345"/>
<dbReference type="eggNOG" id="COG0806">
    <property type="taxonomic scope" value="Bacteria"/>
</dbReference>
<dbReference type="HOGENOM" id="CLU_077636_3_1_9"/>
<dbReference type="Proteomes" id="UP000001697">
    <property type="component" value="Chromosome"/>
</dbReference>
<dbReference type="GO" id="GO:0005737">
    <property type="term" value="C:cytoplasm"/>
    <property type="evidence" value="ECO:0007669"/>
    <property type="project" value="UniProtKB-SubCell"/>
</dbReference>
<dbReference type="GO" id="GO:0005840">
    <property type="term" value="C:ribosome"/>
    <property type="evidence" value="ECO:0007669"/>
    <property type="project" value="InterPro"/>
</dbReference>
<dbReference type="GO" id="GO:0043022">
    <property type="term" value="F:ribosome binding"/>
    <property type="evidence" value="ECO:0007669"/>
    <property type="project" value="InterPro"/>
</dbReference>
<dbReference type="GO" id="GO:0042274">
    <property type="term" value="P:ribosomal small subunit biogenesis"/>
    <property type="evidence" value="ECO:0007669"/>
    <property type="project" value="UniProtKB-UniRule"/>
</dbReference>
<dbReference type="GO" id="GO:0006364">
    <property type="term" value="P:rRNA processing"/>
    <property type="evidence" value="ECO:0007669"/>
    <property type="project" value="UniProtKB-UniRule"/>
</dbReference>
<dbReference type="Gene3D" id="2.30.30.240">
    <property type="entry name" value="PRC-barrel domain"/>
    <property type="match status" value="1"/>
</dbReference>
<dbReference type="Gene3D" id="2.40.30.60">
    <property type="entry name" value="RimM"/>
    <property type="match status" value="1"/>
</dbReference>
<dbReference type="HAMAP" id="MF_00014">
    <property type="entry name" value="Ribosome_mat_RimM"/>
    <property type="match status" value="1"/>
</dbReference>
<dbReference type="InterPro" id="IPR011033">
    <property type="entry name" value="PRC_barrel-like_sf"/>
</dbReference>
<dbReference type="InterPro" id="IPR056792">
    <property type="entry name" value="PRC_RimM"/>
</dbReference>
<dbReference type="InterPro" id="IPR011961">
    <property type="entry name" value="RimM"/>
</dbReference>
<dbReference type="InterPro" id="IPR002676">
    <property type="entry name" value="RimM_N"/>
</dbReference>
<dbReference type="InterPro" id="IPR036976">
    <property type="entry name" value="RimM_N_sf"/>
</dbReference>
<dbReference type="InterPro" id="IPR009000">
    <property type="entry name" value="Transl_B-barrel_sf"/>
</dbReference>
<dbReference type="NCBIfam" id="TIGR02273">
    <property type="entry name" value="16S_RimM"/>
    <property type="match status" value="1"/>
</dbReference>
<dbReference type="PANTHER" id="PTHR33692">
    <property type="entry name" value="RIBOSOME MATURATION FACTOR RIMM"/>
    <property type="match status" value="1"/>
</dbReference>
<dbReference type="PANTHER" id="PTHR33692:SF1">
    <property type="entry name" value="RIBOSOME MATURATION FACTOR RIMM"/>
    <property type="match status" value="1"/>
</dbReference>
<dbReference type="Pfam" id="PF24986">
    <property type="entry name" value="PRC_RimM"/>
    <property type="match status" value="1"/>
</dbReference>
<dbReference type="Pfam" id="PF01782">
    <property type="entry name" value="RimM"/>
    <property type="match status" value="1"/>
</dbReference>
<dbReference type="SUPFAM" id="SSF50346">
    <property type="entry name" value="PRC-barrel domain"/>
    <property type="match status" value="1"/>
</dbReference>
<dbReference type="SUPFAM" id="SSF50447">
    <property type="entry name" value="Translation proteins"/>
    <property type="match status" value="1"/>
</dbReference>
<evidence type="ECO:0000255" key="1">
    <source>
        <dbReference type="HAMAP-Rule" id="MF_00014"/>
    </source>
</evidence>
<feature type="chain" id="PRO_1000089506" description="Ribosome maturation factor RimM">
    <location>
        <begin position="1"/>
        <end position="169"/>
    </location>
</feature>
<feature type="domain" description="PRC barrel" evidence="1">
    <location>
        <begin position="94"/>
        <end position="168"/>
    </location>
</feature>
<protein>
    <recommendedName>
        <fullName evidence="1">Ribosome maturation factor RimM</fullName>
    </recommendedName>
</protein>
<keyword id="KW-0143">Chaperone</keyword>
<keyword id="KW-0963">Cytoplasm</keyword>
<keyword id="KW-1185">Reference proteome</keyword>
<keyword id="KW-0690">Ribosome biogenesis</keyword>
<keyword id="KW-0698">rRNA processing</keyword>
<organism>
    <name type="scientific">Limosilactobacillus fermentum (strain NBRC 3956 / LMG 18251)</name>
    <name type="common">Lactobacillus fermentum</name>
    <dbReference type="NCBI Taxonomy" id="334390"/>
    <lineage>
        <taxon>Bacteria</taxon>
        <taxon>Bacillati</taxon>
        <taxon>Bacillota</taxon>
        <taxon>Bacilli</taxon>
        <taxon>Lactobacillales</taxon>
        <taxon>Lactobacillaceae</taxon>
        <taxon>Limosilactobacillus</taxon>
    </lineage>
</organism>
<sequence>MELYTVGKIVNTHGIRGEVKVVATTDFVDQRFADGATLYLVKKDQAPVELTVEHARMHKGLVLVKFKQFNNINEVQHFRDAELKVADQDQAELEEGQYYYHQIIGLTAETVDGRVLGKIKEILAPGANDVWVVDRKQKTDLLLPVIDDVVKEVDLAGGKVIVELLEGLE</sequence>
<accession>B2GD26</accession>
<name>RIMM_LIMF3</name>
<gene>
    <name evidence="1" type="primary">rimM</name>
    <name type="ordered locus">LAF_1222</name>
</gene>